<keyword id="KW-0204">Cytolysis</keyword>
<keyword id="KW-0903">Direct protein sequencing</keyword>
<keyword id="KW-1015">Disulfide bond</keyword>
<keyword id="KW-0960">Knottin</keyword>
<keyword id="KW-0611">Plant defense</keyword>
<reference evidence="4" key="1">
    <citation type="journal article" date="2015" name="ACS Chem. Biol.">
        <title>Lysine-rich cyclotides: a new subclass of circular knotted proteins from Violaceae.</title>
        <authorList>
            <person name="Ravipati A.S."/>
            <person name="Henriques S.T."/>
            <person name="Poth A.G."/>
            <person name="Kaas Q."/>
            <person name="Wang C.K."/>
            <person name="Colgrave M.L."/>
            <person name="Craik D.J."/>
        </authorList>
    </citation>
    <scope>PROTEIN SEQUENCE</scope>
    <scope>FUNCTION</scope>
    <scope>MASS SPECTROMETRY</scope>
    <scope>IDENTIFICATION BY MASS SPECTROMETRY</scope>
    <scope>PRESENCE OF DISULFIDE BONDS</scope>
    <scope>CYCLIZATION</scope>
    <scope>STRUCTURE BY NMR</scope>
</reference>
<name>CYML7_MELLF</name>
<organism evidence="3">
    <name type="scientific">Melicytus latifolius</name>
    <name type="common">Norfolk Island mahoe</name>
    <name type="synonym">Hymenanthera latifolia</name>
    <dbReference type="NCBI Taxonomy" id="212268"/>
    <lineage>
        <taxon>Eukaryota</taxon>
        <taxon>Viridiplantae</taxon>
        <taxon>Streptophyta</taxon>
        <taxon>Embryophyta</taxon>
        <taxon>Tracheophyta</taxon>
        <taxon>Spermatophyta</taxon>
        <taxon>Magnoliopsida</taxon>
        <taxon>eudicotyledons</taxon>
        <taxon>Gunneridae</taxon>
        <taxon>Pentapetalae</taxon>
        <taxon>rosids</taxon>
        <taxon>fabids</taxon>
        <taxon>Malpighiales</taxon>
        <taxon>Violaceae</taxon>
        <taxon>Melicytus</taxon>
    </lineage>
</organism>
<feature type="peptide" id="PRO_0000437513" description="Cyclotide mela-7" evidence="1 2">
    <location>
        <begin position="1"/>
        <end position="29"/>
    </location>
</feature>
<feature type="disulfide bond" evidence="1">
    <location>
        <begin position="5"/>
        <end position="19"/>
    </location>
</feature>
<feature type="disulfide bond" evidence="1">
    <location>
        <begin position="9"/>
        <end position="21"/>
    </location>
</feature>
<feature type="disulfide bond" evidence="1">
    <location>
        <begin position="14"/>
        <end position="26"/>
    </location>
</feature>
<feature type="cross-link" description="Cyclopeptide (Gly-Asn)" evidence="5">
    <location>
        <begin position="1"/>
        <end position="29"/>
    </location>
</feature>
<sequence length="29" mass="3090">GLPTCGETCFKGKCYTPGCSCSYPICKKN</sequence>
<protein>
    <recommendedName>
        <fullName evidence="3">Cyclotide mela-7</fullName>
    </recommendedName>
</protein>
<evidence type="ECO:0000255" key="1">
    <source>
        <dbReference type="PROSITE-ProRule" id="PRU00395"/>
    </source>
</evidence>
<evidence type="ECO:0000269" key="2">
    <source>
    </source>
</evidence>
<evidence type="ECO:0000303" key="3">
    <source>
    </source>
</evidence>
<evidence type="ECO:0000305" key="4"/>
<evidence type="ECO:0000305" key="5">
    <source>
    </source>
</evidence>
<dbReference type="SMR" id="C0HK34"/>
<dbReference type="GO" id="GO:0006952">
    <property type="term" value="P:defense response"/>
    <property type="evidence" value="ECO:0007669"/>
    <property type="project" value="UniProtKB-KW"/>
</dbReference>
<dbReference type="GO" id="GO:0031640">
    <property type="term" value="P:killing of cells of another organism"/>
    <property type="evidence" value="ECO:0007669"/>
    <property type="project" value="UniProtKB-KW"/>
</dbReference>
<dbReference type="InterPro" id="IPR005535">
    <property type="entry name" value="Cyclotide"/>
</dbReference>
<dbReference type="InterPro" id="IPR036146">
    <property type="entry name" value="Cyclotide_sf"/>
</dbReference>
<dbReference type="Pfam" id="PF03784">
    <property type="entry name" value="Cyclotide"/>
    <property type="match status" value="1"/>
</dbReference>
<dbReference type="SUPFAM" id="SSF57038">
    <property type="entry name" value="Cyclotides"/>
    <property type="match status" value="1"/>
</dbReference>
<dbReference type="PROSITE" id="PS51052">
    <property type="entry name" value="CYCLOTIDE"/>
    <property type="match status" value="1"/>
</dbReference>
<accession>C0HK34</accession>
<proteinExistence type="evidence at protein level"/>
<comment type="function">
    <text evidence="1 2">Probably participates in a plant defense mechanism (Potential). Binds to and induces leakage in phospholipd membranes, particularly ones containing 1-palmitoyl-2-oleophosphatidylethanolamine (POPE) (PubMed:26322745). In vitro, displays cytotoxicity against cultured cells but no hemolytic activity towards fresh erythrocytes (PubMed:26322745). Not active against Gram-negative bacterium E.coli ATCC 25922 or Gram-positive bacterium S.aureus ATCC 25923 up to a concentration of 64 uM (PubMed:26322745).</text>
</comment>
<comment type="domain">
    <text evidence="4">The presence of a 'disulfide through disulfide knot' structurally defines this protein as a knottin.</text>
</comment>
<comment type="PTM">
    <text evidence="1 2">This is a cyclic peptide.</text>
</comment>
<comment type="PTM">
    <text evidence="2">Contains 3 disulfide bonds.</text>
</comment>
<comment type="mass spectrometry" mass="3063.29" method="Electrospray" evidence="2"/>
<comment type="similarity">
    <text evidence="3">Belongs to the cyclotide family. Moebuis subfamily.</text>
</comment>
<comment type="caution">
    <text evidence="1">This peptide is cyclic. The start position was chosen by similarity to Oak1 (kalata B1) for which the DNA sequence is known.</text>
</comment>